<reference key="1">
    <citation type="journal article" date="2006" name="J. Bacteriol.">
        <title>Comparison of the genome sequence of the poultry pathogen Bordetella avium with those of B. bronchiseptica, B. pertussis, and B. parapertussis reveals extensive diversity in surface structures associated with host interaction.</title>
        <authorList>
            <person name="Sebaihia M."/>
            <person name="Preston A."/>
            <person name="Maskell D.J."/>
            <person name="Kuzmiak H."/>
            <person name="Connell T.D."/>
            <person name="King N.D."/>
            <person name="Orndorff P.E."/>
            <person name="Miyamoto D.M."/>
            <person name="Thomson N.R."/>
            <person name="Harris D."/>
            <person name="Goble A."/>
            <person name="Lord A."/>
            <person name="Murphy L."/>
            <person name="Quail M.A."/>
            <person name="Rutter S."/>
            <person name="Squares R."/>
            <person name="Squares S."/>
            <person name="Woodward J."/>
            <person name="Parkhill J."/>
            <person name="Temple L.M."/>
        </authorList>
    </citation>
    <scope>NUCLEOTIDE SEQUENCE [LARGE SCALE GENOMIC DNA]</scope>
    <source>
        <strain>197N</strain>
    </source>
</reference>
<feature type="chain" id="PRO_0000235594" description="5'-nucleotidase SurE">
    <location>
        <begin position="1"/>
        <end position="252"/>
    </location>
</feature>
<feature type="binding site" evidence="1">
    <location>
        <position position="8"/>
    </location>
    <ligand>
        <name>a divalent metal cation</name>
        <dbReference type="ChEBI" id="CHEBI:60240"/>
    </ligand>
</feature>
<feature type="binding site" evidence="1">
    <location>
        <position position="9"/>
    </location>
    <ligand>
        <name>a divalent metal cation</name>
        <dbReference type="ChEBI" id="CHEBI:60240"/>
    </ligand>
</feature>
<feature type="binding site" evidence="1">
    <location>
        <position position="39"/>
    </location>
    <ligand>
        <name>a divalent metal cation</name>
        <dbReference type="ChEBI" id="CHEBI:60240"/>
    </ligand>
</feature>
<feature type="binding site" evidence="1">
    <location>
        <position position="91"/>
    </location>
    <ligand>
        <name>a divalent metal cation</name>
        <dbReference type="ChEBI" id="CHEBI:60240"/>
    </ligand>
</feature>
<name>SURE_BORA1</name>
<gene>
    <name evidence="1" type="primary">surE</name>
    <name type="ordered locus">BAV1981</name>
</gene>
<keyword id="KW-0963">Cytoplasm</keyword>
<keyword id="KW-0378">Hydrolase</keyword>
<keyword id="KW-0479">Metal-binding</keyword>
<keyword id="KW-0547">Nucleotide-binding</keyword>
<keyword id="KW-1185">Reference proteome</keyword>
<evidence type="ECO:0000255" key="1">
    <source>
        <dbReference type="HAMAP-Rule" id="MF_00060"/>
    </source>
</evidence>
<sequence>MRILVSNDDGYNAPGLEALVEALSDLGELTVVAPETNHSGASNSLTLNRPLSVRQAANGFLYVNGTPTDCVHVALTGLMDTRPDLVVSGINNGANLGDDTLYSGTVAAASEAHLFGIPAIAFSLVDKGWEHLESAARAARRIVERQIAAPLGVPALLNVNIPNRRYEDLRGVRVTRLGKRHPAEPVVRTTTPYGDTVYWIGPVGLAADATPGTDFHAIADGAVSLTPLRLDLTQYAQLEQLGQWADPLCANL</sequence>
<dbReference type="EC" id="3.1.3.5" evidence="1"/>
<dbReference type="EMBL" id="AM167904">
    <property type="protein sequence ID" value="CAJ49590.1"/>
    <property type="molecule type" value="Genomic_DNA"/>
</dbReference>
<dbReference type="RefSeq" id="WP_012417647.1">
    <property type="nucleotide sequence ID" value="NC_010645.1"/>
</dbReference>
<dbReference type="SMR" id="Q2L006"/>
<dbReference type="STRING" id="360910.BAV1981"/>
<dbReference type="GeneID" id="92934957"/>
<dbReference type="KEGG" id="bav:BAV1981"/>
<dbReference type="eggNOG" id="COG0496">
    <property type="taxonomic scope" value="Bacteria"/>
</dbReference>
<dbReference type="HOGENOM" id="CLU_045192_1_2_4"/>
<dbReference type="OrthoDB" id="9780815at2"/>
<dbReference type="Proteomes" id="UP000001977">
    <property type="component" value="Chromosome"/>
</dbReference>
<dbReference type="GO" id="GO:0005737">
    <property type="term" value="C:cytoplasm"/>
    <property type="evidence" value="ECO:0007669"/>
    <property type="project" value="UniProtKB-SubCell"/>
</dbReference>
<dbReference type="GO" id="GO:0008254">
    <property type="term" value="F:3'-nucleotidase activity"/>
    <property type="evidence" value="ECO:0007669"/>
    <property type="project" value="TreeGrafter"/>
</dbReference>
<dbReference type="GO" id="GO:0008253">
    <property type="term" value="F:5'-nucleotidase activity"/>
    <property type="evidence" value="ECO:0007669"/>
    <property type="project" value="UniProtKB-UniRule"/>
</dbReference>
<dbReference type="GO" id="GO:0004309">
    <property type="term" value="F:exopolyphosphatase activity"/>
    <property type="evidence" value="ECO:0007669"/>
    <property type="project" value="TreeGrafter"/>
</dbReference>
<dbReference type="GO" id="GO:0046872">
    <property type="term" value="F:metal ion binding"/>
    <property type="evidence" value="ECO:0007669"/>
    <property type="project" value="UniProtKB-UniRule"/>
</dbReference>
<dbReference type="GO" id="GO:0000166">
    <property type="term" value="F:nucleotide binding"/>
    <property type="evidence" value="ECO:0007669"/>
    <property type="project" value="UniProtKB-KW"/>
</dbReference>
<dbReference type="FunFam" id="3.40.1210.10:FF:000001">
    <property type="entry name" value="5'/3'-nucleotidase SurE"/>
    <property type="match status" value="1"/>
</dbReference>
<dbReference type="Gene3D" id="3.40.1210.10">
    <property type="entry name" value="Survival protein SurE-like phosphatase/nucleotidase"/>
    <property type="match status" value="1"/>
</dbReference>
<dbReference type="HAMAP" id="MF_00060">
    <property type="entry name" value="SurE"/>
    <property type="match status" value="1"/>
</dbReference>
<dbReference type="InterPro" id="IPR030048">
    <property type="entry name" value="SurE"/>
</dbReference>
<dbReference type="InterPro" id="IPR002828">
    <property type="entry name" value="SurE-like_Pase/nucleotidase"/>
</dbReference>
<dbReference type="InterPro" id="IPR036523">
    <property type="entry name" value="SurE-like_sf"/>
</dbReference>
<dbReference type="NCBIfam" id="NF001489">
    <property type="entry name" value="PRK00346.1-3"/>
    <property type="match status" value="1"/>
</dbReference>
<dbReference type="NCBIfam" id="NF001490">
    <property type="entry name" value="PRK00346.1-4"/>
    <property type="match status" value="1"/>
</dbReference>
<dbReference type="NCBIfam" id="TIGR00087">
    <property type="entry name" value="surE"/>
    <property type="match status" value="1"/>
</dbReference>
<dbReference type="PANTHER" id="PTHR30457">
    <property type="entry name" value="5'-NUCLEOTIDASE SURE"/>
    <property type="match status" value="1"/>
</dbReference>
<dbReference type="PANTHER" id="PTHR30457:SF12">
    <property type="entry name" value="5'_3'-NUCLEOTIDASE SURE"/>
    <property type="match status" value="1"/>
</dbReference>
<dbReference type="Pfam" id="PF01975">
    <property type="entry name" value="SurE"/>
    <property type="match status" value="1"/>
</dbReference>
<dbReference type="SUPFAM" id="SSF64167">
    <property type="entry name" value="SurE-like"/>
    <property type="match status" value="1"/>
</dbReference>
<organism>
    <name type="scientific">Bordetella avium (strain 197N)</name>
    <dbReference type="NCBI Taxonomy" id="360910"/>
    <lineage>
        <taxon>Bacteria</taxon>
        <taxon>Pseudomonadati</taxon>
        <taxon>Pseudomonadota</taxon>
        <taxon>Betaproteobacteria</taxon>
        <taxon>Burkholderiales</taxon>
        <taxon>Alcaligenaceae</taxon>
        <taxon>Bordetella</taxon>
    </lineage>
</organism>
<accession>Q2L006</accession>
<comment type="function">
    <text evidence="1">Nucleotidase that shows phosphatase activity on nucleoside 5'-monophosphates.</text>
</comment>
<comment type="catalytic activity">
    <reaction evidence="1">
        <text>a ribonucleoside 5'-phosphate + H2O = a ribonucleoside + phosphate</text>
        <dbReference type="Rhea" id="RHEA:12484"/>
        <dbReference type="ChEBI" id="CHEBI:15377"/>
        <dbReference type="ChEBI" id="CHEBI:18254"/>
        <dbReference type="ChEBI" id="CHEBI:43474"/>
        <dbReference type="ChEBI" id="CHEBI:58043"/>
        <dbReference type="EC" id="3.1.3.5"/>
    </reaction>
</comment>
<comment type="cofactor">
    <cofactor evidence="1">
        <name>a divalent metal cation</name>
        <dbReference type="ChEBI" id="CHEBI:60240"/>
    </cofactor>
    <text evidence="1">Binds 1 divalent metal cation per subunit.</text>
</comment>
<comment type="subcellular location">
    <subcellularLocation>
        <location evidence="1">Cytoplasm</location>
    </subcellularLocation>
</comment>
<comment type="similarity">
    <text evidence="1">Belongs to the SurE nucleotidase family.</text>
</comment>
<proteinExistence type="inferred from homology"/>
<protein>
    <recommendedName>
        <fullName evidence="1">5'-nucleotidase SurE</fullName>
        <ecNumber evidence="1">3.1.3.5</ecNumber>
    </recommendedName>
    <alternativeName>
        <fullName evidence="1">Nucleoside 5'-monophosphate phosphohydrolase</fullName>
    </alternativeName>
</protein>